<protein>
    <recommendedName>
        <fullName>Lipid-A-disaccharide synthase</fullName>
        <ecNumber>2.4.1.182</ecNumber>
    </recommendedName>
</protein>
<reference key="1">
    <citation type="journal article" date="2000" name="Science">
        <title>Complete genome sequence of Neisseria meningitidis serogroup B strain MC58.</title>
        <authorList>
            <person name="Tettelin H."/>
            <person name="Saunders N.J."/>
            <person name="Heidelberg J.F."/>
            <person name="Jeffries A.C."/>
            <person name="Nelson K.E."/>
            <person name="Eisen J.A."/>
            <person name="Ketchum K.A."/>
            <person name="Hood D.W."/>
            <person name="Peden J.F."/>
            <person name="Dodson R.J."/>
            <person name="Nelson W.C."/>
            <person name="Gwinn M.L."/>
            <person name="DeBoy R.T."/>
            <person name="Peterson J.D."/>
            <person name="Hickey E.K."/>
            <person name="Haft D.H."/>
            <person name="Salzberg S.L."/>
            <person name="White O."/>
            <person name="Fleischmann R.D."/>
            <person name="Dougherty B.A."/>
            <person name="Mason T.M."/>
            <person name="Ciecko A."/>
            <person name="Parksey D.S."/>
            <person name="Blair E."/>
            <person name="Cittone H."/>
            <person name="Clark E.B."/>
            <person name="Cotton M.D."/>
            <person name="Utterback T.R."/>
            <person name="Khouri H.M."/>
            <person name="Qin H."/>
            <person name="Vamathevan J.J."/>
            <person name="Gill J."/>
            <person name="Scarlato V."/>
            <person name="Masignani V."/>
            <person name="Pizza M."/>
            <person name="Grandi G."/>
            <person name="Sun L."/>
            <person name="Smith H.O."/>
            <person name="Fraser C.M."/>
            <person name="Moxon E.R."/>
            <person name="Rappuoli R."/>
            <person name="Venter J.C."/>
        </authorList>
    </citation>
    <scope>NUCLEOTIDE SEQUENCE [LARGE SCALE GENOMIC DNA]</scope>
    <source>
        <strain>ATCC BAA-335 / MC58</strain>
    </source>
</reference>
<gene>
    <name type="primary">lpxB</name>
    <name type="ordered locus">NMB0199</name>
</gene>
<feature type="chain" id="PRO_0000190172" description="Lipid-A-disaccharide synthase">
    <location>
        <begin position="1"/>
        <end position="384"/>
    </location>
</feature>
<accession>Q9K1F5</accession>
<organism>
    <name type="scientific">Neisseria meningitidis serogroup B (strain ATCC BAA-335 / MC58)</name>
    <dbReference type="NCBI Taxonomy" id="122586"/>
    <lineage>
        <taxon>Bacteria</taxon>
        <taxon>Pseudomonadati</taxon>
        <taxon>Pseudomonadota</taxon>
        <taxon>Betaproteobacteria</taxon>
        <taxon>Neisseriales</taxon>
        <taxon>Neisseriaceae</taxon>
        <taxon>Neisseria</taxon>
    </lineage>
</organism>
<dbReference type="EC" id="2.4.1.182"/>
<dbReference type="EMBL" id="AE002098">
    <property type="protein sequence ID" value="AAF40656.1"/>
    <property type="status" value="ALT_INIT"/>
    <property type="molecule type" value="Genomic_DNA"/>
</dbReference>
<dbReference type="PIR" id="A81226">
    <property type="entry name" value="A81226"/>
</dbReference>
<dbReference type="RefSeq" id="NP_273257.1">
    <property type="nucleotide sequence ID" value="NC_003112.2"/>
</dbReference>
<dbReference type="RefSeq" id="WP_010980760.1">
    <property type="nucleotide sequence ID" value="NC_003112.2"/>
</dbReference>
<dbReference type="SMR" id="Q9K1F5"/>
<dbReference type="FunCoup" id="Q9K1F5">
    <property type="interactions" value="282"/>
</dbReference>
<dbReference type="STRING" id="122586.NMB0199"/>
<dbReference type="CAZy" id="GT19">
    <property type="family name" value="Glycosyltransferase Family 19"/>
</dbReference>
<dbReference type="PaxDb" id="122586-NMB0199"/>
<dbReference type="KEGG" id="nme:NMB0199"/>
<dbReference type="PATRIC" id="fig|122586.8.peg.249"/>
<dbReference type="HOGENOM" id="CLU_036577_3_0_4"/>
<dbReference type="InParanoid" id="Q9K1F5"/>
<dbReference type="OrthoDB" id="9801642at2"/>
<dbReference type="UniPathway" id="UPA00973"/>
<dbReference type="Proteomes" id="UP000000425">
    <property type="component" value="Chromosome"/>
</dbReference>
<dbReference type="GO" id="GO:0016020">
    <property type="term" value="C:membrane"/>
    <property type="evidence" value="ECO:0007669"/>
    <property type="project" value="GOC"/>
</dbReference>
<dbReference type="GO" id="GO:0008915">
    <property type="term" value="F:lipid-A-disaccharide synthase activity"/>
    <property type="evidence" value="ECO:0007669"/>
    <property type="project" value="UniProtKB-UniRule"/>
</dbReference>
<dbReference type="GO" id="GO:0005543">
    <property type="term" value="F:phospholipid binding"/>
    <property type="evidence" value="ECO:0000318"/>
    <property type="project" value="GO_Central"/>
</dbReference>
<dbReference type="GO" id="GO:0009245">
    <property type="term" value="P:lipid A biosynthetic process"/>
    <property type="evidence" value="ECO:0000318"/>
    <property type="project" value="GO_Central"/>
</dbReference>
<dbReference type="HAMAP" id="MF_00392">
    <property type="entry name" value="LpxB"/>
    <property type="match status" value="1"/>
</dbReference>
<dbReference type="InterPro" id="IPR003835">
    <property type="entry name" value="Glyco_trans_19"/>
</dbReference>
<dbReference type="NCBIfam" id="TIGR00215">
    <property type="entry name" value="lpxB"/>
    <property type="match status" value="1"/>
</dbReference>
<dbReference type="PANTHER" id="PTHR30372">
    <property type="entry name" value="LIPID-A-DISACCHARIDE SYNTHASE"/>
    <property type="match status" value="1"/>
</dbReference>
<dbReference type="PANTHER" id="PTHR30372:SF4">
    <property type="entry name" value="LIPID-A-DISACCHARIDE SYNTHASE, MITOCHONDRIAL-RELATED"/>
    <property type="match status" value="1"/>
</dbReference>
<dbReference type="Pfam" id="PF02684">
    <property type="entry name" value="LpxB"/>
    <property type="match status" value="1"/>
</dbReference>
<dbReference type="SUPFAM" id="SSF53756">
    <property type="entry name" value="UDP-Glycosyltransferase/glycogen phosphorylase"/>
    <property type="match status" value="1"/>
</dbReference>
<proteinExistence type="inferred from homology"/>
<sequence>MADKKSPLIAVSVGEASGDLLGAHLIRAIRKRCPQARFTGIGGELMKAEGFESLYDQERLAVRGFVEVVRRLPEILRIRRGLVRDLLSLKPDVFVGIDAPDFNLGVAEKLKRSGIPTVHYVSPSVWAWRRERVGKIVHQVNRVLCLFPMEPQLYLDAGGRAEFVGHPMAQLMPLEDDRETARQTLGVDAGIPVFALLPGSRVSEIDYMAPVFFQTALLLLERYPAARFLLPAATEATKRRLAEVLQRPEFAGLPLTVIDRQSETVCRAADAVLVTSGTATLEVALCKRPMVISYKISPLTYAYVKRKIKVPHVGLPNILLGKEAVPELLQSEAKPEKLAAALADWYEHPDKVAALQQDFRALHLLLKKDTADLAARAVLEEAGC</sequence>
<name>LPXB_NEIMB</name>
<comment type="function">
    <text evidence="1">Condensation of UDP-2,3-diacylglucosamine and 2,3-diacylglucosamine-1-phosphate to form lipid A disaccharide, a precursor of lipid A, a phosphorylated glycolipid that anchors the lipopolysaccharide to the outer membrane of the cell.</text>
</comment>
<comment type="catalytic activity">
    <reaction>
        <text>a lipid X + a UDP-2-N,3-O-bis[(3R)-3-hydroxyacyl]-alpha-D-glucosamine = a lipid A disaccharide + UDP + H(+)</text>
        <dbReference type="Rhea" id="RHEA:67828"/>
        <dbReference type="ChEBI" id="CHEBI:15378"/>
        <dbReference type="ChEBI" id="CHEBI:58223"/>
        <dbReference type="ChEBI" id="CHEBI:137748"/>
        <dbReference type="ChEBI" id="CHEBI:176338"/>
        <dbReference type="ChEBI" id="CHEBI:176343"/>
        <dbReference type="EC" id="2.4.1.182"/>
    </reaction>
</comment>
<comment type="pathway">
    <text>Bacterial outer membrane biogenesis; LPS lipid A biosynthesis.</text>
</comment>
<comment type="similarity">
    <text evidence="2">Belongs to the LpxB family.</text>
</comment>
<comment type="sequence caution" evidence="2">
    <conflict type="erroneous initiation">
        <sequence resource="EMBL-CDS" id="AAF40656"/>
    </conflict>
</comment>
<keyword id="KW-0328">Glycosyltransferase</keyword>
<keyword id="KW-0441">Lipid A biosynthesis</keyword>
<keyword id="KW-0444">Lipid biosynthesis</keyword>
<keyword id="KW-0443">Lipid metabolism</keyword>
<keyword id="KW-1185">Reference proteome</keyword>
<keyword id="KW-0808">Transferase</keyword>
<evidence type="ECO:0000250" key="1"/>
<evidence type="ECO:0000305" key="2"/>